<reference key="1">
    <citation type="journal article" date="2006" name="Proc. Natl. Acad. Sci. U.S.A.">
        <title>Burkholderia xenovorans LB400 harbors a multi-replicon, 9.73-Mbp genome shaped for versatility.</title>
        <authorList>
            <person name="Chain P.S.G."/>
            <person name="Denef V.J."/>
            <person name="Konstantinidis K.T."/>
            <person name="Vergez L.M."/>
            <person name="Agullo L."/>
            <person name="Reyes V.L."/>
            <person name="Hauser L."/>
            <person name="Cordova M."/>
            <person name="Gomez L."/>
            <person name="Gonzalez M."/>
            <person name="Land M."/>
            <person name="Lao V."/>
            <person name="Larimer F."/>
            <person name="LiPuma J.J."/>
            <person name="Mahenthiralingam E."/>
            <person name="Malfatti S.A."/>
            <person name="Marx C.J."/>
            <person name="Parnell J.J."/>
            <person name="Ramette A."/>
            <person name="Richardson P."/>
            <person name="Seeger M."/>
            <person name="Smith D."/>
            <person name="Spilker T."/>
            <person name="Sul W.J."/>
            <person name="Tsoi T.V."/>
            <person name="Ulrich L.E."/>
            <person name="Zhulin I.B."/>
            <person name="Tiedje J.M."/>
        </authorList>
    </citation>
    <scope>NUCLEOTIDE SEQUENCE [LARGE SCALE GENOMIC DNA]</scope>
    <source>
        <strain>LB400</strain>
    </source>
</reference>
<proteinExistence type="inferred from homology"/>
<dbReference type="EMBL" id="CP000270">
    <property type="protein sequence ID" value="ABE28539.1"/>
    <property type="molecule type" value="Genomic_DNA"/>
</dbReference>
<dbReference type="RefSeq" id="WP_011486399.1">
    <property type="nucleotide sequence ID" value="NC_007951.1"/>
</dbReference>
<dbReference type="SMR" id="Q147F0"/>
<dbReference type="STRING" id="266265.Bxe_A4462"/>
<dbReference type="KEGG" id="bxb:DR64_2134"/>
<dbReference type="KEGG" id="bxe:Bxe_A4462"/>
<dbReference type="PATRIC" id="fig|266265.5.peg.1"/>
<dbReference type="eggNOG" id="COG0593">
    <property type="taxonomic scope" value="Bacteria"/>
</dbReference>
<dbReference type="Proteomes" id="UP000001817">
    <property type="component" value="Chromosome 1"/>
</dbReference>
<dbReference type="GO" id="GO:0005737">
    <property type="term" value="C:cytoplasm"/>
    <property type="evidence" value="ECO:0007669"/>
    <property type="project" value="UniProtKB-SubCell"/>
</dbReference>
<dbReference type="GO" id="GO:0005886">
    <property type="term" value="C:plasma membrane"/>
    <property type="evidence" value="ECO:0007669"/>
    <property type="project" value="TreeGrafter"/>
</dbReference>
<dbReference type="GO" id="GO:0005524">
    <property type="term" value="F:ATP binding"/>
    <property type="evidence" value="ECO:0007669"/>
    <property type="project" value="UniProtKB-UniRule"/>
</dbReference>
<dbReference type="GO" id="GO:0016887">
    <property type="term" value="F:ATP hydrolysis activity"/>
    <property type="evidence" value="ECO:0007669"/>
    <property type="project" value="InterPro"/>
</dbReference>
<dbReference type="GO" id="GO:0003688">
    <property type="term" value="F:DNA replication origin binding"/>
    <property type="evidence" value="ECO:0007669"/>
    <property type="project" value="UniProtKB-UniRule"/>
</dbReference>
<dbReference type="GO" id="GO:0008289">
    <property type="term" value="F:lipid binding"/>
    <property type="evidence" value="ECO:0007669"/>
    <property type="project" value="UniProtKB-KW"/>
</dbReference>
<dbReference type="GO" id="GO:0006270">
    <property type="term" value="P:DNA replication initiation"/>
    <property type="evidence" value="ECO:0007669"/>
    <property type="project" value="UniProtKB-UniRule"/>
</dbReference>
<dbReference type="GO" id="GO:0006275">
    <property type="term" value="P:regulation of DNA replication"/>
    <property type="evidence" value="ECO:0007669"/>
    <property type="project" value="UniProtKB-UniRule"/>
</dbReference>
<dbReference type="CDD" id="cd00009">
    <property type="entry name" value="AAA"/>
    <property type="match status" value="1"/>
</dbReference>
<dbReference type="CDD" id="cd06571">
    <property type="entry name" value="Bac_DnaA_C"/>
    <property type="match status" value="1"/>
</dbReference>
<dbReference type="FunFam" id="1.10.8.60:FF:000003">
    <property type="entry name" value="Chromosomal replication initiator protein DnaA"/>
    <property type="match status" value="1"/>
</dbReference>
<dbReference type="FunFam" id="3.40.50.300:FF:000668">
    <property type="entry name" value="Chromosomal replication initiator protein DnaA"/>
    <property type="match status" value="1"/>
</dbReference>
<dbReference type="Gene3D" id="1.10.1750.10">
    <property type="match status" value="1"/>
</dbReference>
<dbReference type="Gene3D" id="1.10.8.60">
    <property type="match status" value="1"/>
</dbReference>
<dbReference type="Gene3D" id="3.30.300.180">
    <property type="match status" value="1"/>
</dbReference>
<dbReference type="Gene3D" id="3.40.50.300">
    <property type="entry name" value="P-loop containing nucleotide triphosphate hydrolases"/>
    <property type="match status" value="1"/>
</dbReference>
<dbReference type="HAMAP" id="MF_00377">
    <property type="entry name" value="DnaA_bact"/>
    <property type="match status" value="1"/>
</dbReference>
<dbReference type="InterPro" id="IPR003593">
    <property type="entry name" value="AAA+_ATPase"/>
</dbReference>
<dbReference type="InterPro" id="IPR001957">
    <property type="entry name" value="Chromosome_initiator_DnaA"/>
</dbReference>
<dbReference type="InterPro" id="IPR020591">
    <property type="entry name" value="Chromosome_initiator_DnaA-like"/>
</dbReference>
<dbReference type="InterPro" id="IPR018312">
    <property type="entry name" value="Chromosome_initiator_DnaA_CS"/>
</dbReference>
<dbReference type="InterPro" id="IPR013159">
    <property type="entry name" value="DnaA_C"/>
</dbReference>
<dbReference type="InterPro" id="IPR013317">
    <property type="entry name" value="DnaA_dom"/>
</dbReference>
<dbReference type="InterPro" id="IPR024633">
    <property type="entry name" value="DnaA_N_dom"/>
</dbReference>
<dbReference type="InterPro" id="IPR038454">
    <property type="entry name" value="DnaA_N_sf"/>
</dbReference>
<dbReference type="InterPro" id="IPR027417">
    <property type="entry name" value="P-loop_NTPase"/>
</dbReference>
<dbReference type="InterPro" id="IPR010921">
    <property type="entry name" value="Trp_repressor/repl_initiator"/>
</dbReference>
<dbReference type="NCBIfam" id="TIGR00362">
    <property type="entry name" value="DnaA"/>
    <property type="match status" value="1"/>
</dbReference>
<dbReference type="PANTHER" id="PTHR30050">
    <property type="entry name" value="CHROMOSOMAL REPLICATION INITIATOR PROTEIN DNAA"/>
    <property type="match status" value="1"/>
</dbReference>
<dbReference type="PANTHER" id="PTHR30050:SF2">
    <property type="entry name" value="CHROMOSOMAL REPLICATION INITIATOR PROTEIN DNAA"/>
    <property type="match status" value="1"/>
</dbReference>
<dbReference type="Pfam" id="PF00308">
    <property type="entry name" value="Bac_DnaA"/>
    <property type="match status" value="1"/>
</dbReference>
<dbReference type="Pfam" id="PF08299">
    <property type="entry name" value="Bac_DnaA_C"/>
    <property type="match status" value="1"/>
</dbReference>
<dbReference type="Pfam" id="PF11638">
    <property type="entry name" value="DnaA_N"/>
    <property type="match status" value="1"/>
</dbReference>
<dbReference type="PRINTS" id="PR00051">
    <property type="entry name" value="DNAA"/>
</dbReference>
<dbReference type="SMART" id="SM00382">
    <property type="entry name" value="AAA"/>
    <property type="match status" value="1"/>
</dbReference>
<dbReference type="SMART" id="SM00760">
    <property type="entry name" value="Bac_DnaA_C"/>
    <property type="match status" value="1"/>
</dbReference>
<dbReference type="SUPFAM" id="SSF52540">
    <property type="entry name" value="P-loop containing nucleoside triphosphate hydrolases"/>
    <property type="match status" value="1"/>
</dbReference>
<dbReference type="SUPFAM" id="SSF48295">
    <property type="entry name" value="TrpR-like"/>
    <property type="match status" value="1"/>
</dbReference>
<dbReference type="PROSITE" id="PS01008">
    <property type="entry name" value="DNAA"/>
    <property type="match status" value="1"/>
</dbReference>
<organism>
    <name type="scientific">Paraburkholderia xenovorans (strain LB400)</name>
    <dbReference type="NCBI Taxonomy" id="266265"/>
    <lineage>
        <taxon>Bacteria</taxon>
        <taxon>Pseudomonadati</taxon>
        <taxon>Pseudomonadota</taxon>
        <taxon>Betaproteobacteria</taxon>
        <taxon>Burkholderiales</taxon>
        <taxon>Burkholderiaceae</taxon>
        <taxon>Paraburkholderia</taxon>
    </lineage>
</organism>
<name>DNAA_PARXL</name>
<protein>
    <recommendedName>
        <fullName evidence="1">Chromosomal replication initiator protein DnaA</fullName>
    </recommendedName>
</protein>
<sequence length="544" mass="59605">MNDFWQHCSALLERELTPQQYVTWIKPLAPVAFDAAANTLSIAAPNRFKLDWVKSQFSGRIADMARDFWHTPIDVQFVLDPKAGMRAPAAAAPAPASARPASAPGSMGGSAGNGAAVDAAVGAVQAAQTARANGANSANNAMANLNANARAAAEQNANARAAAEDSADLDLPSLDANEAAAARRTWRPGQSAGSNGNGETDSMYERSKLNPVLTFDNFVTGKANQLARAAAIQVADNPGISYNPLFLYGGVGLGKTHLIHAIGNQLLMDKAGARIRYIHAEQYVSDVVKAYQRKAFDDFKRYYHSLDLLLIDDIQFFSGKSRTQEEFFYAFEALVANKAQVIITSDTYPKEISGIDDRLISRFDSGLTVAIEPPELEMRVAILMRKAQSEFVSLNEDVAFFVAKHLRSNVRELEGALRKILAYSKFHGREITIEVTKEALKDLLTVQNRQISVENIQKTTADFYSIKVADMYSKKRPANIARPRQIAMYLAKELTQKSLPEIGELFGGRDHTTVLHAVRKIADERSKDAQLNHELHVLEQTLKG</sequence>
<gene>
    <name evidence="1" type="primary">dnaA</name>
    <name type="ordered locus">Bxeno_A0001</name>
    <name type="ORF">Bxe_A4462</name>
</gene>
<evidence type="ECO:0000255" key="1">
    <source>
        <dbReference type="HAMAP-Rule" id="MF_00377"/>
    </source>
</evidence>
<evidence type="ECO:0000256" key="2">
    <source>
        <dbReference type="SAM" id="MobiDB-lite"/>
    </source>
</evidence>
<keyword id="KW-0067">ATP-binding</keyword>
<keyword id="KW-0963">Cytoplasm</keyword>
<keyword id="KW-0235">DNA replication</keyword>
<keyword id="KW-0238">DNA-binding</keyword>
<keyword id="KW-0446">Lipid-binding</keyword>
<keyword id="KW-0547">Nucleotide-binding</keyword>
<keyword id="KW-1185">Reference proteome</keyword>
<feature type="chain" id="PRO_1000048624" description="Chromosomal replication initiator protein DnaA">
    <location>
        <begin position="1"/>
        <end position="544"/>
    </location>
</feature>
<feature type="region of interest" description="Domain I, interacts with DnaA modulators" evidence="1">
    <location>
        <begin position="1"/>
        <end position="71"/>
    </location>
</feature>
<feature type="region of interest" description="Domain II" evidence="1">
    <location>
        <begin position="71"/>
        <end position="207"/>
    </location>
</feature>
<feature type="region of interest" description="Disordered" evidence="2">
    <location>
        <begin position="90"/>
        <end position="111"/>
    </location>
</feature>
<feature type="region of interest" description="Disordered" evidence="2">
    <location>
        <begin position="180"/>
        <end position="203"/>
    </location>
</feature>
<feature type="region of interest" description="Domain III, AAA+ region" evidence="1">
    <location>
        <begin position="208"/>
        <end position="424"/>
    </location>
</feature>
<feature type="region of interest" description="Domain IV, binds dsDNA" evidence="1">
    <location>
        <begin position="425"/>
        <end position="544"/>
    </location>
</feature>
<feature type="compositionally biased region" description="Low complexity" evidence="2">
    <location>
        <begin position="90"/>
        <end position="105"/>
    </location>
</feature>
<feature type="compositionally biased region" description="Polar residues" evidence="2">
    <location>
        <begin position="191"/>
        <end position="200"/>
    </location>
</feature>
<feature type="binding site" evidence="1">
    <location>
        <position position="252"/>
    </location>
    <ligand>
        <name>ATP</name>
        <dbReference type="ChEBI" id="CHEBI:30616"/>
    </ligand>
</feature>
<feature type="binding site" evidence="1">
    <location>
        <position position="254"/>
    </location>
    <ligand>
        <name>ATP</name>
        <dbReference type="ChEBI" id="CHEBI:30616"/>
    </ligand>
</feature>
<feature type="binding site" evidence="1">
    <location>
        <position position="255"/>
    </location>
    <ligand>
        <name>ATP</name>
        <dbReference type="ChEBI" id="CHEBI:30616"/>
    </ligand>
</feature>
<feature type="binding site" evidence="1">
    <location>
        <position position="256"/>
    </location>
    <ligand>
        <name>ATP</name>
        <dbReference type="ChEBI" id="CHEBI:30616"/>
    </ligand>
</feature>
<accession>Q147F0</accession>
<comment type="function">
    <text evidence="1">Plays an essential role in the initiation and regulation of chromosomal replication. ATP-DnaA binds to the origin of replication (oriC) to initiate formation of the DNA replication initiation complex once per cell cycle. Binds the DnaA box (a 9 base pair repeat at the origin) and separates the double-stranded (ds)DNA. Forms a right-handed helical filament on oriC DNA; dsDNA binds to the exterior of the filament while single-stranded (ss)DNA is stabiized in the filament's interior. The ATP-DnaA-oriC complex binds and stabilizes one strand of the AT-rich DNA unwinding element (DUE), permitting loading of DNA polymerase. After initiation quickly degrades to an ADP-DnaA complex that is not apt for DNA replication. Binds acidic phospholipids.</text>
</comment>
<comment type="subunit">
    <text evidence="1">Oligomerizes as a right-handed, spiral filament on DNA at oriC.</text>
</comment>
<comment type="subcellular location">
    <subcellularLocation>
        <location evidence="1">Cytoplasm</location>
    </subcellularLocation>
</comment>
<comment type="domain">
    <text evidence="1">Domain I is involved in oligomerization and binding regulators, domain II is flexibile and of varying length in different bacteria, domain III forms the AAA+ region, while domain IV binds dsDNA.</text>
</comment>
<comment type="similarity">
    <text evidence="1">Belongs to the DnaA family.</text>
</comment>